<dbReference type="EMBL" id="FN392281">
    <property type="protein sequence ID" value="CAY61935.1"/>
    <property type="molecule type" value="mRNA"/>
</dbReference>
<dbReference type="SMR" id="C9X4K3"/>
<dbReference type="GO" id="GO:0005576">
    <property type="term" value="C:extracellular region"/>
    <property type="evidence" value="ECO:0007669"/>
    <property type="project" value="UniProtKB-SubCell"/>
</dbReference>
<dbReference type="GO" id="GO:0019871">
    <property type="term" value="F:sodium channel inhibitor activity"/>
    <property type="evidence" value="ECO:0007669"/>
    <property type="project" value="InterPro"/>
</dbReference>
<dbReference type="GO" id="GO:0090729">
    <property type="term" value="F:toxin activity"/>
    <property type="evidence" value="ECO:0007669"/>
    <property type="project" value="UniProtKB-KW"/>
</dbReference>
<dbReference type="GO" id="GO:0042742">
    <property type="term" value="P:defense response to bacterium"/>
    <property type="evidence" value="ECO:0007669"/>
    <property type="project" value="UniProtKB-KW"/>
</dbReference>
<dbReference type="CDD" id="cd23106">
    <property type="entry name" value="neurotoxins_LC_scorpion"/>
    <property type="match status" value="1"/>
</dbReference>
<dbReference type="FunFam" id="3.30.30.10:FF:000002">
    <property type="entry name" value="Alpha-like toxin BmK-M1"/>
    <property type="match status" value="1"/>
</dbReference>
<dbReference type="Gene3D" id="3.30.30.10">
    <property type="entry name" value="Knottin, scorpion toxin-like"/>
    <property type="match status" value="1"/>
</dbReference>
<dbReference type="InterPro" id="IPR044062">
    <property type="entry name" value="LCN-type_CS_alpha_beta_dom"/>
</dbReference>
<dbReference type="InterPro" id="IPR003614">
    <property type="entry name" value="Scorpion_toxin-like"/>
</dbReference>
<dbReference type="InterPro" id="IPR036574">
    <property type="entry name" value="Scorpion_toxin-like_sf"/>
</dbReference>
<dbReference type="InterPro" id="IPR018218">
    <property type="entry name" value="Scorpion_toxinL"/>
</dbReference>
<dbReference type="InterPro" id="IPR002061">
    <property type="entry name" value="Scorpion_toxinL/defensin"/>
</dbReference>
<dbReference type="Pfam" id="PF00537">
    <property type="entry name" value="Toxin_3"/>
    <property type="match status" value="1"/>
</dbReference>
<dbReference type="PRINTS" id="PR00285">
    <property type="entry name" value="SCORPNTOXIN"/>
</dbReference>
<dbReference type="SMART" id="SM00505">
    <property type="entry name" value="Knot1"/>
    <property type="match status" value="1"/>
</dbReference>
<dbReference type="SUPFAM" id="SSF57095">
    <property type="entry name" value="Scorpion toxin-like"/>
    <property type="match status" value="1"/>
</dbReference>
<dbReference type="PROSITE" id="PS51863">
    <property type="entry name" value="LCN_CSAB"/>
    <property type="match status" value="1"/>
</dbReference>
<protein>
    <recommendedName>
        <fullName>Toxin TdNa5</fullName>
    </recommendedName>
    <alternativeName>
        <fullName>T-Arthr*-beta* NaTx2.5</fullName>
    </alternativeName>
</protein>
<evidence type="ECO:0000250" key="1">
    <source>
        <dbReference type="UniProtKB" id="P0C1X7"/>
    </source>
</evidence>
<evidence type="ECO:0000250" key="2">
    <source>
        <dbReference type="UniProtKB" id="P0CF39"/>
    </source>
</evidence>
<evidence type="ECO:0000255" key="3"/>
<evidence type="ECO:0000255" key="4">
    <source>
        <dbReference type="PROSITE-ProRule" id="PRU01210"/>
    </source>
</evidence>
<evidence type="ECO:0000305" key="5"/>
<evidence type="ECO:0000305" key="6">
    <source>
    </source>
</evidence>
<sequence length="83" mass="9382">MKTIIFFIACLMLIDVVVESKDGYIIEHRGCKYSCFFGTNSWCNTECTLKKGSSGYCAWPACWCYGLPDNVKIFDSNNNKCGK</sequence>
<proteinExistence type="inferred from homology"/>
<accession>C9X4K3</accession>
<name>SCNA5_TITDI</name>
<reference key="1">
    <citation type="journal article" date="2009" name="Biochimie">
        <title>Molecular cloning and nucleotide sequence analysis of genes from a cDNA library of the scorpion Tityus discrepans.</title>
        <authorList>
            <person name="D'Suze G."/>
            <person name="Schwartz E.F."/>
            <person name="Garcia-Gomez B.I."/>
            <person name="Sevcik C."/>
            <person name="Possani L.D."/>
        </authorList>
    </citation>
    <scope>NUCLEOTIDE SEQUENCE [MRNA]</scope>
    <source>
        <tissue>Venom gland</tissue>
    </source>
</reference>
<reference key="2">
    <citation type="journal article" date="2012" name="PLoS ONE">
        <title>Identification and phylogenetic analysis of Tityus pachyurus and Tityus obscurus novel putative Na+-channel scorpion toxins.</title>
        <authorList>
            <person name="Guerrero-Vargas J.A."/>
            <person name="Mourao C.B."/>
            <person name="Quintero-Hernandez V."/>
            <person name="Possani L.D."/>
            <person name="Schwartz E.F."/>
        </authorList>
    </citation>
    <scope>NOMENCLATURE</scope>
</reference>
<organism>
    <name type="scientific">Tityus discrepans</name>
    <name type="common">Venezuelan scorpion</name>
    <dbReference type="NCBI Taxonomy" id="57059"/>
    <lineage>
        <taxon>Eukaryota</taxon>
        <taxon>Metazoa</taxon>
        <taxon>Ecdysozoa</taxon>
        <taxon>Arthropoda</taxon>
        <taxon>Chelicerata</taxon>
        <taxon>Arachnida</taxon>
        <taxon>Scorpiones</taxon>
        <taxon>Buthida</taxon>
        <taxon>Buthoidea</taxon>
        <taxon>Buthidae</taxon>
        <taxon>Tityus</taxon>
    </lineage>
</organism>
<feature type="signal peptide" evidence="3">
    <location>
        <begin position="1"/>
        <end position="20"/>
    </location>
</feature>
<feature type="chain" id="PRO_5000525369" description="Toxin TdNa5" evidence="1">
    <location>
        <begin position="21"/>
        <end position="81"/>
    </location>
</feature>
<feature type="domain" description="LCN-type CS-alpha/beta" evidence="4">
    <location>
        <begin position="21"/>
        <end position="82"/>
    </location>
</feature>
<feature type="modified residue" description="Cysteine amide" evidence="1">
    <location>
        <position position="81"/>
    </location>
</feature>
<feature type="disulfide bond" evidence="4">
    <location>
        <begin position="31"/>
        <end position="81"/>
    </location>
</feature>
<feature type="disulfide bond" evidence="4">
    <location>
        <begin position="35"/>
        <end position="57"/>
    </location>
</feature>
<feature type="disulfide bond" evidence="4">
    <location>
        <begin position="43"/>
        <end position="62"/>
    </location>
</feature>
<feature type="disulfide bond" evidence="4">
    <location>
        <begin position="47"/>
        <end position="64"/>
    </location>
</feature>
<keyword id="KW-0027">Amidation</keyword>
<keyword id="KW-0044">Antibiotic</keyword>
<keyword id="KW-0929">Antimicrobial</keyword>
<keyword id="KW-1015">Disulfide bond</keyword>
<keyword id="KW-0872">Ion channel impairing toxin</keyword>
<keyword id="KW-0528">Neurotoxin</keyword>
<keyword id="KW-0964">Secreted</keyword>
<keyword id="KW-0732">Signal</keyword>
<keyword id="KW-0800">Toxin</keyword>
<keyword id="KW-0738">Voltage-gated sodium channel impairing toxin</keyword>
<comment type="function">
    <text evidence="1 2">Inhibits the sodium currents (Nav) in an apparent irreversible manner (By similarity). Produces small depolarization and induces repetitive firing in squid axons (By similarity). Is specific for arthropods (crickets, triatomides, crabs and squids), but is non-toxic to mice (By similarity). Shows antibacterial activity against both Gram-positive and Gram-negative bacteria (By similarity).</text>
</comment>
<comment type="subcellular location">
    <subcellularLocation>
        <location evidence="6">Secreted</location>
    </subcellularLocation>
</comment>
<comment type="tissue specificity">
    <text evidence="6">Expressed by the venom gland.</text>
</comment>
<comment type="domain">
    <text evidence="5">Has the structural arrangement of an alpha-helix connected to antiparallel beta-sheets by disulfide bonds (CS-alpha/beta).</text>
</comment>
<comment type="similarity">
    <text evidence="5">Belongs to the long (4 C-C) scorpion toxin superfamily. Sodium channel inhibitor family. Beta subfamily.</text>
</comment>